<gene>
    <name evidence="1" type="primary">ftsH</name>
    <name type="ordered locus">TM_0580</name>
</gene>
<organism>
    <name type="scientific">Thermotoga maritima (strain ATCC 43589 / DSM 3109 / JCM 10099 / NBRC 100826 / MSB8)</name>
    <dbReference type="NCBI Taxonomy" id="243274"/>
    <lineage>
        <taxon>Bacteria</taxon>
        <taxon>Thermotogati</taxon>
        <taxon>Thermotogota</taxon>
        <taxon>Thermotogae</taxon>
        <taxon>Thermotogales</taxon>
        <taxon>Thermotogaceae</taxon>
        <taxon>Thermotoga</taxon>
    </lineage>
</organism>
<keyword id="KW-0002">3D-structure</keyword>
<keyword id="KW-0067">ATP-binding</keyword>
<keyword id="KW-0997">Cell inner membrane</keyword>
<keyword id="KW-1003">Cell membrane</keyword>
<keyword id="KW-0378">Hydrolase</keyword>
<keyword id="KW-0472">Membrane</keyword>
<keyword id="KW-0479">Metal-binding</keyword>
<keyword id="KW-0482">Metalloprotease</keyword>
<keyword id="KW-0547">Nucleotide-binding</keyword>
<keyword id="KW-0645">Protease</keyword>
<keyword id="KW-1185">Reference proteome</keyword>
<keyword id="KW-0812">Transmembrane</keyword>
<keyword id="KW-1133">Transmembrane helix</keyword>
<keyword id="KW-0862">Zinc</keyword>
<accession>Q9WZ49</accession>
<evidence type="ECO:0000255" key="1">
    <source>
        <dbReference type="HAMAP-Rule" id="MF_01458"/>
    </source>
</evidence>
<evidence type="ECO:0000269" key="2">
    <source>
    </source>
</evidence>
<evidence type="ECO:0000269" key="3">
    <source>
    </source>
</evidence>
<evidence type="ECO:0007829" key="4">
    <source>
        <dbReference type="PDB" id="2CE7"/>
    </source>
</evidence>
<evidence type="ECO:0007829" key="5">
    <source>
        <dbReference type="PDB" id="4M8A"/>
    </source>
</evidence>
<evidence type="ECO:0007829" key="6">
    <source>
        <dbReference type="PDB" id="7TDO"/>
    </source>
</evidence>
<sequence length="610" mass="68099">MNRSNIWNLLFTILIIVTLFWLARFFYVENSPVSKLSYTSFVQMVEDERSVVSEVVIRDDGVLRVYTKDGRVYEVDAPWAVNDSQLIEKLVSKGIKVSGERSGSSSFWINVLGTLIPTILFIVVWLFIMRSLSGRNNQAFTFTKSRATMYKPSGNKRVTFKDVGGAEEAIEELKEVVEFLKDPSKFNRIGARMPKGILLVGPPGTGKTLLARAVAGEANVPFFHISGSDFVELFVGVGAARVRDLFAQAKAHAPCIVFIDEIDAVGRHRGAGLGGGHDEREQTLNQLLVEMDGFDSKEGIIVMAATNRPDILDPALLRPGRFDKKIVVDPPDMLGRKKILEIHTRNKPLAEDVNLEIIAKRTPGFVGADLENLVNEAALLAAREGRDKITMKDFEEAIDRVIAGPARKSKLISPKEKRIIAYHEAGHAVVSTVVPNGEPVHRISIIPRGYKALGYTLHLPEEDKYLVSRNELLDKLTALLGGRAAEEVVFGDVTSGAANDIERATEIARNMVCQLGMSEELGPLAWGKEEQEVFLGKEITRLRNYSEEVASKIDEEVKKIVTNCYERAKEIIRKYRKQLDNIVEILLEKETIEGDELRRILSEEFEKVVE</sequence>
<dbReference type="EC" id="3.4.24.-" evidence="1"/>
<dbReference type="EMBL" id="AE000512">
    <property type="protein sequence ID" value="AAD35665.1"/>
    <property type="molecule type" value="Genomic_DNA"/>
</dbReference>
<dbReference type="PIR" id="E72358">
    <property type="entry name" value="E72358"/>
</dbReference>
<dbReference type="RefSeq" id="NP_228390.1">
    <property type="nucleotide sequence ID" value="NC_000853.1"/>
</dbReference>
<dbReference type="RefSeq" id="WP_004081278.1">
    <property type="nucleotide sequence ID" value="NZ_CP011107.1"/>
</dbReference>
<dbReference type="PDB" id="2CE7">
    <property type="method" value="X-ray"/>
    <property type="resolution" value="2.44 A"/>
    <property type="chains" value="A/B/C/D/E/F=147-610"/>
</dbReference>
<dbReference type="PDB" id="2CEA">
    <property type="method" value="X-ray"/>
    <property type="resolution" value="2.75 A"/>
    <property type="chains" value="A/B/C/D/E/F=147-610"/>
</dbReference>
<dbReference type="PDB" id="3KDS">
    <property type="method" value="X-ray"/>
    <property type="resolution" value="2.60 A"/>
    <property type="chains" value="E/F/G=147-610"/>
</dbReference>
<dbReference type="PDB" id="4M8A">
    <property type="method" value="X-ray"/>
    <property type="resolution" value="1.50 A"/>
    <property type="chains" value="A/B/C=34-101"/>
</dbReference>
<dbReference type="PDB" id="4Q0F">
    <property type="method" value="X-ray"/>
    <property type="resolution" value="1.95 A"/>
    <property type="chains" value="A/B/C=34-101"/>
</dbReference>
<dbReference type="PDB" id="7TDO">
    <property type="method" value="EM"/>
    <property type="resolution" value="3.15 A"/>
    <property type="chains" value="A/B/C/D/E/F=1-610"/>
</dbReference>
<dbReference type="PDBsum" id="2CE7"/>
<dbReference type="PDBsum" id="2CEA"/>
<dbReference type="PDBsum" id="3KDS"/>
<dbReference type="PDBsum" id="4M8A"/>
<dbReference type="PDBsum" id="4Q0F"/>
<dbReference type="PDBsum" id="7TDO"/>
<dbReference type="EMDB" id="EMD-25837"/>
<dbReference type="EMDB" id="EMD-43577"/>
<dbReference type="EMDB" id="EMD-43579"/>
<dbReference type="EMDB" id="EMD-43580"/>
<dbReference type="EMDB" id="EMD-43581"/>
<dbReference type="SMR" id="Q9WZ49"/>
<dbReference type="DIP" id="DIP-49026N"/>
<dbReference type="FunCoup" id="Q9WZ49">
    <property type="interactions" value="376"/>
</dbReference>
<dbReference type="STRING" id="243274.TM_0580"/>
<dbReference type="MEROPS" id="M41.021"/>
<dbReference type="TCDB" id="3.A.29.1.7">
    <property type="family name" value="the mitochondrial inner membrane i-aaa protease complex (mimp) family"/>
</dbReference>
<dbReference type="PaxDb" id="243274-THEMA_01765"/>
<dbReference type="DNASU" id="897649"/>
<dbReference type="EnsemblBacteria" id="AAD35665">
    <property type="protein sequence ID" value="AAD35665"/>
    <property type="gene ID" value="TM_0580"/>
</dbReference>
<dbReference type="KEGG" id="tma:TM0580"/>
<dbReference type="KEGG" id="tmi:THEMA_01765"/>
<dbReference type="KEGG" id="tmm:Tmari_0578"/>
<dbReference type="KEGG" id="tmw:THMA_0595"/>
<dbReference type="eggNOG" id="COG0465">
    <property type="taxonomic scope" value="Bacteria"/>
</dbReference>
<dbReference type="InParanoid" id="Q9WZ49"/>
<dbReference type="OrthoDB" id="9809379at2"/>
<dbReference type="BRENDA" id="3.4.24.B17">
    <property type="organism ID" value="6331"/>
</dbReference>
<dbReference type="BRENDA" id="3.4.24.B20">
    <property type="organism ID" value="6331"/>
</dbReference>
<dbReference type="EvolutionaryTrace" id="Q9WZ49"/>
<dbReference type="Proteomes" id="UP000008183">
    <property type="component" value="Chromosome"/>
</dbReference>
<dbReference type="GO" id="GO:0005886">
    <property type="term" value="C:plasma membrane"/>
    <property type="evidence" value="ECO:0000318"/>
    <property type="project" value="GO_Central"/>
</dbReference>
<dbReference type="GO" id="GO:0005524">
    <property type="term" value="F:ATP binding"/>
    <property type="evidence" value="ECO:0007669"/>
    <property type="project" value="UniProtKB-UniRule"/>
</dbReference>
<dbReference type="GO" id="GO:0016887">
    <property type="term" value="F:ATP hydrolysis activity"/>
    <property type="evidence" value="ECO:0007669"/>
    <property type="project" value="UniProtKB-UniRule"/>
</dbReference>
<dbReference type="GO" id="GO:0004176">
    <property type="term" value="F:ATP-dependent peptidase activity"/>
    <property type="evidence" value="ECO:0000318"/>
    <property type="project" value="GO_Central"/>
</dbReference>
<dbReference type="GO" id="GO:0042802">
    <property type="term" value="F:identical protein binding"/>
    <property type="evidence" value="ECO:0000353"/>
    <property type="project" value="IntAct"/>
</dbReference>
<dbReference type="GO" id="GO:0004222">
    <property type="term" value="F:metalloendopeptidase activity"/>
    <property type="evidence" value="ECO:0007669"/>
    <property type="project" value="InterPro"/>
</dbReference>
<dbReference type="GO" id="GO:0008270">
    <property type="term" value="F:zinc ion binding"/>
    <property type="evidence" value="ECO:0007669"/>
    <property type="project" value="UniProtKB-UniRule"/>
</dbReference>
<dbReference type="GO" id="GO:0030163">
    <property type="term" value="P:protein catabolic process"/>
    <property type="evidence" value="ECO:0000318"/>
    <property type="project" value="GO_Central"/>
</dbReference>
<dbReference type="GO" id="GO:0006508">
    <property type="term" value="P:proteolysis"/>
    <property type="evidence" value="ECO:0000318"/>
    <property type="project" value="GO_Central"/>
</dbReference>
<dbReference type="CDD" id="cd19501">
    <property type="entry name" value="RecA-like_FtsH"/>
    <property type="match status" value="1"/>
</dbReference>
<dbReference type="FunFam" id="1.10.8.60:FF:000001">
    <property type="entry name" value="ATP-dependent zinc metalloprotease FtsH"/>
    <property type="match status" value="1"/>
</dbReference>
<dbReference type="FunFam" id="1.20.58.760:FF:000001">
    <property type="entry name" value="ATP-dependent zinc metalloprotease FtsH"/>
    <property type="match status" value="1"/>
</dbReference>
<dbReference type="FunFam" id="3.40.50.300:FF:000001">
    <property type="entry name" value="ATP-dependent zinc metalloprotease FtsH"/>
    <property type="match status" value="1"/>
</dbReference>
<dbReference type="Gene3D" id="1.10.8.60">
    <property type="match status" value="1"/>
</dbReference>
<dbReference type="Gene3D" id="3.30.720.210">
    <property type="match status" value="1"/>
</dbReference>
<dbReference type="Gene3D" id="3.40.50.300">
    <property type="entry name" value="P-loop containing nucleotide triphosphate hydrolases"/>
    <property type="match status" value="1"/>
</dbReference>
<dbReference type="Gene3D" id="1.20.58.760">
    <property type="entry name" value="Peptidase M41"/>
    <property type="match status" value="1"/>
</dbReference>
<dbReference type="HAMAP" id="MF_01458">
    <property type="entry name" value="FtsH"/>
    <property type="match status" value="1"/>
</dbReference>
<dbReference type="InterPro" id="IPR003593">
    <property type="entry name" value="AAA+_ATPase"/>
</dbReference>
<dbReference type="InterPro" id="IPR041569">
    <property type="entry name" value="AAA_lid_3"/>
</dbReference>
<dbReference type="InterPro" id="IPR003959">
    <property type="entry name" value="ATPase_AAA_core"/>
</dbReference>
<dbReference type="InterPro" id="IPR003960">
    <property type="entry name" value="ATPase_AAA_CS"/>
</dbReference>
<dbReference type="InterPro" id="IPR005936">
    <property type="entry name" value="FtsH"/>
</dbReference>
<dbReference type="InterPro" id="IPR027417">
    <property type="entry name" value="P-loop_NTPase"/>
</dbReference>
<dbReference type="InterPro" id="IPR011546">
    <property type="entry name" value="Pept_M41_FtsH_extracell"/>
</dbReference>
<dbReference type="InterPro" id="IPR000642">
    <property type="entry name" value="Peptidase_M41"/>
</dbReference>
<dbReference type="InterPro" id="IPR037219">
    <property type="entry name" value="Peptidase_M41-like"/>
</dbReference>
<dbReference type="NCBIfam" id="TIGR01241">
    <property type="entry name" value="FtsH_fam"/>
    <property type="match status" value="1"/>
</dbReference>
<dbReference type="PANTHER" id="PTHR23076:SF97">
    <property type="entry name" value="ATP-DEPENDENT ZINC METALLOPROTEASE YME1L1"/>
    <property type="match status" value="1"/>
</dbReference>
<dbReference type="PANTHER" id="PTHR23076">
    <property type="entry name" value="METALLOPROTEASE M41 FTSH"/>
    <property type="match status" value="1"/>
</dbReference>
<dbReference type="Pfam" id="PF00004">
    <property type="entry name" value="AAA"/>
    <property type="match status" value="1"/>
</dbReference>
<dbReference type="Pfam" id="PF17862">
    <property type="entry name" value="AAA_lid_3"/>
    <property type="match status" value="1"/>
</dbReference>
<dbReference type="Pfam" id="PF06480">
    <property type="entry name" value="FtsH_ext"/>
    <property type="match status" value="1"/>
</dbReference>
<dbReference type="Pfam" id="PF01434">
    <property type="entry name" value="Peptidase_M41"/>
    <property type="match status" value="1"/>
</dbReference>
<dbReference type="SMART" id="SM00382">
    <property type="entry name" value="AAA"/>
    <property type="match status" value="1"/>
</dbReference>
<dbReference type="SUPFAM" id="SSF140990">
    <property type="entry name" value="FtsH protease domain-like"/>
    <property type="match status" value="1"/>
</dbReference>
<dbReference type="SUPFAM" id="SSF52540">
    <property type="entry name" value="P-loop containing nucleoside triphosphate hydrolases"/>
    <property type="match status" value="1"/>
</dbReference>
<dbReference type="PROSITE" id="PS00674">
    <property type="entry name" value="AAA"/>
    <property type="match status" value="1"/>
</dbReference>
<feature type="chain" id="PRO_0000400412" description="ATP-dependent zinc metalloprotease FtsH">
    <location>
        <begin position="1"/>
        <end position="610"/>
    </location>
</feature>
<feature type="topological domain" description="Cytoplasmic" evidence="1">
    <location>
        <begin position="1"/>
        <end position="5"/>
    </location>
</feature>
<feature type="transmembrane region" description="Helical" evidence="1">
    <location>
        <begin position="6"/>
        <end position="26"/>
    </location>
</feature>
<feature type="topological domain" description="Periplasmic" evidence="1">
    <location>
        <begin position="27"/>
        <end position="107"/>
    </location>
</feature>
<feature type="transmembrane region" description="Helical" evidence="1">
    <location>
        <begin position="108"/>
        <end position="128"/>
    </location>
</feature>
<feature type="topological domain" description="Cytoplasmic" evidence="1">
    <location>
        <begin position="129"/>
        <end position="610"/>
    </location>
</feature>
<feature type="active site" evidence="1 2">
    <location>
        <position position="424"/>
    </location>
</feature>
<feature type="binding site" evidence="2">
    <location>
        <position position="164"/>
    </location>
    <ligand>
        <name>ATP</name>
        <dbReference type="ChEBI" id="CHEBI:30616"/>
    </ligand>
</feature>
<feature type="binding site" evidence="2">
    <location>
        <begin position="204"/>
        <end position="208"/>
    </location>
    <ligand>
        <name>ATP</name>
        <dbReference type="ChEBI" id="CHEBI:30616"/>
    </ligand>
</feature>
<feature type="binding site" evidence="2">
    <location>
        <position position="209"/>
    </location>
    <ligand>
        <name>ATP</name>
        <dbReference type="ChEBI" id="CHEBI:30616"/>
    </ligand>
</feature>
<feature type="binding site" evidence="2">
    <location>
        <position position="343"/>
    </location>
    <ligand>
        <name>ATP</name>
        <dbReference type="ChEBI" id="CHEBI:30616"/>
    </ligand>
</feature>
<feature type="binding site" evidence="2">
    <location>
        <position position="371"/>
    </location>
    <ligand>
        <name>ATP</name>
        <dbReference type="ChEBI" id="CHEBI:30616"/>
    </ligand>
</feature>
<feature type="binding site" evidence="2">
    <location>
        <position position="423"/>
    </location>
    <ligand>
        <name>Zn(2+)</name>
        <dbReference type="ChEBI" id="CHEBI:29105"/>
        <note>catalytic</note>
    </ligand>
</feature>
<feature type="binding site" evidence="2">
    <location>
        <position position="427"/>
    </location>
    <ligand>
        <name>Zn(2+)</name>
        <dbReference type="ChEBI" id="CHEBI:29105"/>
        <note>catalytic</note>
    </ligand>
</feature>
<feature type="binding site" evidence="2">
    <location>
        <position position="500"/>
    </location>
    <ligand>
        <name>Zn(2+)</name>
        <dbReference type="ChEBI" id="CHEBI:29105"/>
        <note>catalytic</note>
    </ligand>
</feature>
<feature type="mutagenesis site" description="Complete loss of protease activity and of oligomerization." evidence="3">
    <original>G</original>
    <variation>L</variation>
    <location>
        <position position="404"/>
    </location>
</feature>
<feature type="mutagenesis site" description="Complete loss of protease activity." evidence="2">
    <original>D</original>
    <variation>A</variation>
    <location>
        <position position="500"/>
    </location>
</feature>
<feature type="helix" evidence="5">
    <location>
        <begin position="38"/>
        <end position="46"/>
    </location>
</feature>
<feature type="strand" evidence="5">
    <location>
        <begin position="52"/>
        <end position="57"/>
    </location>
</feature>
<feature type="strand" evidence="5">
    <location>
        <begin position="61"/>
        <end position="67"/>
    </location>
</feature>
<feature type="strand" evidence="5">
    <location>
        <begin position="72"/>
        <end position="76"/>
    </location>
</feature>
<feature type="helix" evidence="5">
    <location>
        <begin position="78"/>
        <end position="80"/>
    </location>
</feature>
<feature type="helix" evidence="5">
    <location>
        <begin position="84"/>
        <end position="92"/>
    </location>
</feature>
<feature type="strand" evidence="5">
    <location>
        <begin position="96"/>
        <end position="99"/>
    </location>
</feature>
<feature type="helix" evidence="4">
    <location>
        <begin position="160"/>
        <end position="162"/>
    </location>
</feature>
<feature type="helix" evidence="4">
    <location>
        <begin position="167"/>
        <end position="181"/>
    </location>
</feature>
<feature type="helix" evidence="4">
    <location>
        <begin position="184"/>
        <end position="187"/>
    </location>
</feature>
<feature type="turn" evidence="4">
    <location>
        <begin position="188"/>
        <end position="190"/>
    </location>
</feature>
<feature type="strand" evidence="4">
    <location>
        <begin position="195"/>
        <end position="200"/>
    </location>
</feature>
<feature type="helix" evidence="4">
    <location>
        <begin position="207"/>
        <end position="218"/>
    </location>
</feature>
<feature type="strand" evidence="4">
    <location>
        <begin position="222"/>
        <end position="226"/>
    </location>
</feature>
<feature type="helix" evidence="4">
    <location>
        <begin position="227"/>
        <end position="229"/>
    </location>
</feature>
<feature type="turn" evidence="4">
    <location>
        <begin position="230"/>
        <end position="232"/>
    </location>
</feature>
<feature type="helix" evidence="4">
    <location>
        <begin position="237"/>
        <end position="251"/>
    </location>
</feature>
<feature type="strand" evidence="4">
    <location>
        <begin position="254"/>
        <end position="260"/>
    </location>
</feature>
<feature type="helix" evidence="4">
    <location>
        <begin position="262"/>
        <end position="264"/>
    </location>
</feature>
<feature type="helix" evidence="4">
    <location>
        <begin position="279"/>
        <end position="293"/>
    </location>
</feature>
<feature type="helix" evidence="4">
    <location>
        <begin position="296"/>
        <end position="298"/>
    </location>
</feature>
<feature type="strand" evidence="4">
    <location>
        <begin position="300"/>
        <end position="307"/>
    </location>
</feature>
<feature type="helix" evidence="4">
    <location>
        <begin position="309"/>
        <end position="311"/>
    </location>
</feature>
<feature type="helix" evidence="4">
    <location>
        <begin position="314"/>
        <end position="317"/>
    </location>
</feature>
<feature type="strand" evidence="4">
    <location>
        <begin position="324"/>
        <end position="327"/>
    </location>
</feature>
<feature type="helix" evidence="4">
    <location>
        <begin position="333"/>
        <end position="344"/>
    </location>
</feature>
<feature type="strand" evidence="6">
    <location>
        <begin position="345"/>
        <end position="347"/>
    </location>
</feature>
<feature type="helix" evidence="4">
    <location>
        <begin position="355"/>
        <end position="360"/>
    </location>
</feature>
<feature type="helix" evidence="4">
    <location>
        <begin position="367"/>
        <end position="383"/>
    </location>
</feature>
<feature type="strand" evidence="4">
    <location>
        <begin position="387"/>
        <end position="389"/>
    </location>
</feature>
<feature type="helix" evidence="4">
    <location>
        <begin position="391"/>
        <end position="401"/>
    </location>
</feature>
<feature type="helix" evidence="4">
    <location>
        <begin position="414"/>
        <end position="433"/>
    </location>
</feature>
<feature type="strand" evidence="6">
    <location>
        <begin position="434"/>
        <end position="436"/>
    </location>
</feature>
<feature type="strand" evidence="4">
    <location>
        <begin position="442"/>
        <end position="444"/>
    </location>
</feature>
<feature type="strand" evidence="6">
    <location>
        <begin position="448"/>
        <end position="451"/>
    </location>
</feature>
<feature type="helix" evidence="4">
    <location>
        <begin position="453"/>
        <end position="456"/>
    </location>
</feature>
<feature type="helix" evidence="4">
    <location>
        <begin position="469"/>
        <end position="479"/>
    </location>
</feature>
<feature type="helix" evidence="4">
    <location>
        <begin position="481"/>
        <end position="490"/>
    </location>
</feature>
<feature type="helix" evidence="4">
    <location>
        <begin position="495"/>
        <end position="497"/>
    </location>
</feature>
<feature type="helix" evidence="4">
    <location>
        <begin position="498"/>
        <end position="513"/>
    </location>
</feature>
<feature type="turn" evidence="4">
    <location>
        <begin position="519"/>
        <end position="521"/>
    </location>
</feature>
<feature type="helix" evidence="4">
    <location>
        <begin position="547"/>
        <end position="574"/>
    </location>
</feature>
<feature type="helix" evidence="4">
    <location>
        <begin position="576"/>
        <end position="589"/>
    </location>
</feature>
<feature type="strand" evidence="4">
    <location>
        <begin position="590"/>
        <end position="593"/>
    </location>
</feature>
<feature type="helix" evidence="4">
    <location>
        <begin position="594"/>
        <end position="600"/>
    </location>
</feature>
<name>FTSH_THEMA</name>
<protein>
    <recommendedName>
        <fullName evidence="1">ATP-dependent zinc metalloprotease FtsH</fullName>
        <ecNumber evidence="1">3.4.24.-</ecNumber>
    </recommendedName>
</protein>
<comment type="function">
    <text evidence="1">Acts as a processive, ATP-dependent zinc metallopeptidase for both cytoplasmic and membrane proteins. Plays a role in the quality control of integral membrane proteins.</text>
</comment>
<comment type="cofactor">
    <cofactor evidence="1 2">
        <name>Zn(2+)</name>
        <dbReference type="ChEBI" id="CHEBI:29105"/>
    </cofactor>
    <text evidence="1 2">Binds 1 zinc ion per subunit.</text>
</comment>
<comment type="subunit">
    <text evidence="2 3">The isolated ADP-bound cytosolic domain forms a 6-fold symmetric protease disk and a 2-fold symmetric AAA ATPase ring. In the absence of nucleotide the AAA ATPase ring also forms symmetric hexamers.</text>
</comment>
<comment type="interaction">
    <interactant intactId="EBI-15819194">
        <id>Q9WZ49</id>
    </interactant>
    <interactant intactId="EBI-15819194">
        <id>Q9WZ49</id>
        <label>ftsH</label>
    </interactant>
    <organismsDiffer>false</organismsDiffer>
    <experiments>5</experiments>
</comment>
<comment type="subcellular location">
    <subcellularLocation>
        <location evidence="1">Cell inner membrane</location>
        <topology evidence="1">Multi-pass membrane protein</topology>
        <orientation evidence="1">Cytoplasmic side</orientation>
    </subcellularLocation>
</comment>
<comment type="similarity">
    <text evidence="1">In the central section; belongs to the AAA ATPase family.</text>
</comment>
<comment type="similarity">
    <text evidence="1">In the C-terminal section; belongs to the peptidase M41 family.</text>
</comment>
<reference key="1">
    <citation type="journal article" date="1999" name="Nature">
        <title>Evidence for lateral gene transfer between Archaea and Bacteria from genome sequence of Thermotoga maritima.</title>
        <authorList>
            <person name="Nelson K.E."/>
            <person name="Clayton R.A."/>
            <person name="Gill S.R."/>
            <person name="Gwinn M.L."/>
            <person name="Dodson R.J."/>
            <person name="Haft D.H."/>
            <person name="Hickey E.K."/>
            <person name="Peterson J.D."/>
            <person name="Nelson W.C."/>
            <person name="Ketchum K.A."/>
            <person name="McDonald L.A."/>
            <person name="Utterback T.R."/>
            <person name="Malek J.A."/>
            <person name="Linher K.D."/>
            <person name="Garrett M.M."/>
            <person name="Stewart A.M."/>
            <person name="Cotton M.D."/>
            <person name="Pratt M.S."/>
            <person name="Phillips C.A."/>
            <person name="Richardson D.L."/>
            <person name="Heidelberg J.F."/>
            <person name="Sutton G.G."/>
            <person name="Fleischmann R.D."/>
            <person name="Eisen J.A."/>
            <person name="White O."/>
            <person name="Salzberg S.L."/>
            <person name="Smith H.O."/>
            <person name="Venter J.C."/>
            <person name="Fraser C.M."/>
        </authorList>
    </citation>
    <scope>NUCLEOTIDE SEQUENCE [LARGE SCALE GENOMIC DNA]</scope>
    <source>
        <strain>ATCC 43589 / DSM 3109 / JCM 10099 / NBRC 100826 / MSB8</strain>
    </source>
</reference>
<reference key="2">
    <citation type="journal article" date="2006" name="Proc. Natl. Acad. Sci. U.S.A.">
        <title>The molecular architecture of the metalloprotease FtsH.</title>
        <authorList>
            <person name="Bieniossek C."/>
            <person name="Schalch T."/>
            <person name="Bumann M."/>
            <person name="Meister M."/>
            <person name="Meier R."/>
            <person name="Baumann U."/>
        </authorList>
    </citation>
    <scope>X-RAY CRYSTALLOGRAPHY (2.44 ANGSTROMS) OF 147-610 WITH BOUND ADP AND ZINC</scope>
    <scope>COFACTOR</scope>
    <scope>SUBUNIT</scope>
    <scope>MUTAGENESIS OF ASP-500</scope>
</reference>
<reference key="3">
    <citation type="journal article" date="2009" name="Proc. Natl. Acad. Sci. U.S.A.">
        <title>The crystal structure of apo-FtsH reveals domain movements necessary for substrate unfolding and translocation.</title>
        <authorList>
            <person name="Bieniossek C."/>
            <person name="Niederhauser B."/>
            <person name="Baumann U.M."/>
        </authorList>
    </citation>
    <scope>X-RAY CRYSTALLOGRAPHY (2.6 ANGSTROMS) OF 147-610 OF MUTANT ALA-207 WITHOUT NUCLEOTIDE</scope>
    <scope>SUBUNIT</scope>
    <scope>MUTAGENESIS OF GLY-404</scope>
</reference>
<proteinExistence type="evidence at protein level"/>